<reference key="1">
    <citation type="journal article" date="2012" name="BMC Genomics">
        <title>Comparative genomics and transcriptomics of lineages I, II, and III strains of Listeria monocytogenes.</title>
        <authorList>
            <person name="Hain T."/>
            <person name="Ghai R."/>
            <person name="Billion A."/>
            <person name="Kuenne C.T."/>
            <person name="Steinweg C."/>
            <person name="Izar B."/>
            <person name="Mohamed W."/>
            <person name="Mraheil M."/>
            <person name="Domann E."/>
            <person name="Schaffrath S."/>
            <person name="Karst U."/>
            <person name="Goesmann A."/>
            <person name="Oehm S."/>
            <person name="Puhler A."/>
            <person name="Merkl R."/>
            <person name="Vorwerk S."/>
            <person name="Glaser P."/>
            <person name="Garrido P."/>
            <person name="Rusniok C."/>
            <person name="Buchrieser C."/>
            <person name="Goebel W."/>
            <person name="Chakraborty T."/>
        </authorList>
    </citation>
    <scope>NUCLEOTIDE SEQUENCE [LARGE SCALE GENOMIC DNA]</scope>
    <source>
        <strain>CLIP80459</strain>
    </source>
</reference>
<comment type="function">
    <text evidence="1">Catalyzes the ATP-dependent phosphorylation of L-homoserine to L-homoserine phosphate.</text>
</comment>
<comment type="catalytic activity">
    <reaction evidence="1">
        <text>L-homoserine + ATP = O-phospho-L-homoserine + ADP + H(+)</text>
        <dbReference type="Rhea" id="RHEA:13985"/>
        <dbReference type="ChEBI" id="CHEBI:15378"/>
        <dbReference type="ChEBI" id="CHEBI:30616"/>
        <dbReference type="ChEBI" id="CHEBI:57476"/>
        <dbReference type="ChEBI" id="CHEBI:57590"/>
        <dbReference type="ChEBI" id="CHEBI:456216"/>
        <dbReference type="EC" id="2.7.1.39"/>
    </reaction>
</comment>
<comment type="pathway">
    <text evidence="1">Amino-acid biosynthesis; L-threonine biosynthesis; L-threonine from L-aspartate: step 4/5.</text>
</comment>
<comment type="subcellular location">
    <subcellularLocation>
        <location evidence="1">Cytoplasm</location>
    </subcellularLocation>
</comment>
<comment type="similarity">
    <text evidence="1">Belongs to the GHMP kinase family. Homoserine kinase subfamily.</text>
</comment>
<dbReference type="EC" id="2.7.1.39" evidence="1"/>
<dbReference type="EMBL" id="FM242711">
    <property type="protein sequence ID" value="CAS06269.1"/>
    <property type="molecule type" value="Genomic_DNA"/>
</dbReference>
<dbReference type="RefSeq" id="WP_003727886.1">
    <property type="nucleotide sequence ID" value="NC_012488.1"/>
</dbReference>
<dbReference type="SMR" id="C1KYW2"/>
<dbReference type="KEGG" id="lmc:Lm4b_02514"/>
<dbReference type="HOGENOM" id="CLU_041243_0_0_9"/>
<dbReference type="UniPathway" id="UPA00050">
    <property type="reaction ID" value="UER00064"/>
</dbReference>
<dbReference type="GO" id="GO:0005737">
    <property type="term" value="C:cytoplasm"/>
    <property type="evidence" value="ECO:0007669"/>
    <property type="project" value="UniProtKB-SubCell"/>
</dbReference>
<dbReference type="GO" id="GO:0005524">
    <property type="term" value="F:ATP binding"/>
    <property type="evidence" value="ECO:0007669"/>
    <property type="project" value="UniProtKB-UniRule"/>
</dbReference>
<dbReference type="GO" id="GO:0004413">
    <property type="term" value="F:homoserine kinase activity"/>
    <property type="evidence" value="ECO:0007669"/>
    <property type="project" value="UniProtKB-UniRule"/>
</dbReference>
<dbReference type="GO" id="GO:0009088">
    <property type="term" value="P:threonine biosynthetic process"/>
    <property type="evidence" value="ECO:0007669"/>
    <property type="project" value="UniProtKB-UniRule"/>
</dbReference>
<dbReference type="Gene3D" id="3.30.230.10">
    <property type="match status" value="1"/>
</dbReference>
<dbReference type="Gene3D" id="3.30.70.890">
    <property type="entry name" value="GHMP kinase, C-terminal domain"/>
    <property type="match status" value="1"/>
</dbReference>
<dbReference type="HAMAP" id="MF_00384">
    <property type="entry name" value="Homoser_kinase"/>
    <property type="match status" value="1"/>
</dbReference>
<dbReference type="InterPro" id="IPR013750">
    <property type="entry name" value="GHMP_kinase_C_dom"/>
</dbReference>
<dbReference type="InterPro" id="IPR036554">
    <property type="entry name" value="GHMP_kinase_C_sf"/>
</dbReference>
<dbReference type="InterPro" id="IPR006204">
    <property type="entry name" value="GHMP_kinase_N_dom"/>
</dbReference>
<dbReference type="InterPro" id="IPR006203">
    <property type="entry name" value="GHMP_knse_ATP-bd_CS"/>
</dbReference>
<dbReference type="InterPro" id="IPR000870">
    <property type="entry name" value="Homoserine_kinase"/>
</dbReference>
<dbReference type="InterPro" id="IPR020568">
    <property type="entry name" value="Ribosomal_Su5_D2-typ_SF"/>
</dbReference>
<dbReference type="InterPro" id="IPR014721">
    <property type="entry name" value="Ribsml_uS5_D2-typ_fold_subgr"/>
</dbReference>
<dbReference type="NCBIfam" id="TIGR00191">
    <property type="entry name" value="thrB"/>
    <property type="match status" value="1"/>
</dbReference>
<dbReference type="PANTHER" id="PTHR20861:SF1">
    <property type="entry name" value="HOMOSERINE KINASE"/>
    <property type="match status" value="1"/>
</dbReference>
<dbReference type="PANTHER" id="PTHR20861">
    <property type="entry name" value="HOMOSERINE/4-DIPHOSPHOCYTIDYL-2-C-METHYL-D-ERYTHRITOL KINASE"/>
    <property type="match status" value="1"/>
</dbReference>
<dbReference type="Pfam" id="PF08544">
    <property type="entry name" value="GHMP_kinases_C"/>
    <property type="match status" value="1"/>
</dbReference>
<dbReference type="Pfam" id="PF00288">
    <property type="entry name" value="GHMP_kinases_N"/>
    <property type="match status" value="1"/>
</dbReference>
<dbReference type="PIRSF" id="PIRSF000676">
    <property type="entry name" value="Homoser_kin"/>
    <property type="match status" value="1"/>
</dbReference>
<dbReference type="PRINTS" id="PR00958">
    <property type="entry name" value="HOMSERKINASE"/>
</dbReference>
<dbReference type="SUPFAM" id="SSF55060">
    <property type="entry name" value="GHMP Kinase, C-terminal domain"/>
    <property type="match status" value="1"/>
</dbReference>
<dbReference type="SUPFAM" id="SSF54211">
    <property type="entry name" value="Ribosomal protein S5 domain 2-like"/>
    <property type="match status" value="1"/>
</dbReference>
<dbReference type="PROSITE" id="PS00627">
    <property type="entry name" value="GHMP_KINASES_ATP"/>
    <property type="match status" value="1"/>
</dbReference>
<organism>
    <name type="scientific">Listeria monocytogenes serotype 4b (strain CLIP80459)</name>
    <dbReference type="NCBI Taxonomy" id="568819"/>
    <lineage>
        <taxon>Bacteria</taxon>
        <taxon>Bacillati</taxon>
        <taxon>Bacillota</taxon>
        <taxon>Bacilli</taxon>
        <taxon>Bacillales</taxon>
        <taxon>Listeriaceae</taxon>
        <taxon>Listeria</taxon>
    </lineage>
</organism>
<gene>
    <name evidence="1" type="primary">thrB</name>
    <name type="ordered locus">Lm4b_02514</name>
</gene>
<evidence type="ECO:0000255" key="1">
    <source>
        <dbReference type="HAMAP-Rule" id="MF_00384"/>
    </source>
</evidence>
<proteinExistence type="inferred from homology"/>
<protein>
    <recommendedName>
        <fullName evidence="1">Homoserine kinase</fullName>
        <shortName evidence="1">HK</shortName>
        <shortName evidence="1">HSK</shortName>
        <ecNumber evidence="1">2.7.1.39</ecNumber>
    </recommendedName>
</protein>
<accession>C1KYW2</accession>
<sequence length="288" mass="30792">MRIRVPATTANLGPGFDSCGLALTLYLTLDIGAEADSWYIEHNIGGGIPHDETNVIIETALNLAPNLTPHHLVMTCDIPPARGLGSSSAAVVAGIELANTLAELKLSKEEKVRIAAEIEGHPDNVAPAVLGNWVVGAKLDGEDFYVRHLFPDCALIAFIPKAELLTSESRGVLPDTLPFKEAVQASSIANVMIAAILRNDMALAGEMMERDLWHEKYRSQLVPHLTQIRDVAKSQGAYAACLSGAGPTVLVFAPRNLANTLQTSLQTLEIDADVLLLDVEGSGAEVFR</sequence>
<name>KHSE_LISMC</name>
<keyword id="KW-0028">Amino-acid biosynthesis</keyword>
<keyword id="KW-0067">ATP-binding</keyword>
<keyword id="KW-0963">Cytoplasm</keyword>
<keyword id="KW-0418">Kinase</keyword>
<keyword id="KW-0547">Nucleotide-binding</keyword>
<keyword id="KW-0791">Threonine biosynthesis</keyword>
<keyword id="KW-0808">Transferase</keyword>
<feature type="chain" id="PRO_1000205736" description="Homoserine kinase">
    <location>
        <begin position="1"/>
        <end position="288"/>
    </location>
</feature>
<feature type="binding site" evidence="1">
    <location>
        <begin position="79"/>
        <end position="89"/>
    </location>
    <ligand>
        <name>ATP</name>
        <dbReference type="ChEBI" id="CHEBI:30616"/>
    </ligand>
</feature>